<comment type="function">
    <text evidence="3 4 5 6 7">In association with cdk-4, regulates the progression through the G1 phase of the cell cycle during postembryonic development (PubMed:10518501, PubMed:11684669, PubMed:25562820). Regulates proliferation of the coelomocyte lineage and intestinal cells during late embryogenesis (PubMed:11684669, PubMed:15708572). In complex with cdk-4, involved in sex determination during gonadogenesis by regulating the asymmetric division of the somatic gonadal precursor cell (SGP) (PubMed:16198291).</text>
</comment>
<comment type="subunit">
    <text evidence="3">Interacts with cdk-4; the interaction is likely involved in regulating cdk-4 activity (PubMed:10518501).</text>
</comment>
<comment type="interaction">
    <interactant intactId="EBI-2420074">
        <id>Q9U2M5</id>
    </interactant>
    <interactant intactId="EBI-14063019">
        <id>Q9XTR1</id>
        <label>cdk-4</label>
    </interactant>
    <organismsDiffer>false</organismsDiffer>
    <experiments>2</experiments>
</comment>
<comment type="developmental stage">
    <text evidence="3">Expression initiates during mid-embryogenesis primarily in post-proliferative hypodermal cells and neurons in the head, ventral cord and tail, then declines until hatching where it is mainly seen in seam cells. Expressed throughout larval development in several blast cell linages. In the P lineage, expression is restricted to proliferating cells, whereas it persists in somatic gonads and seam cells. In somatic gonads, expression is restricted to the spermathecal cells and their precursors. Not expressed in the intestine.</text>
</comment>
<comment type="disruption phenotype">
    <text evidence="3 4 5 7">Arrested cell division in the G1 phase during larval development (PubMed:25562820). RNAi-mediated knockdown results in an arrest at L2 stage which is associated with uncoordinated movements, a slightly shorter and stouter body morphology, growth arrest and premature death (PubMed:10518501). In addition, during larval development, cell division is impaired in P blast cells and mesoblast M cells due to an arrest prior to S phase (PubMed:10518501). Lack of cell division in somatic gonad precursors Z1 and Z4 which is associated with a failure to maintain germline proliferation resulting in an abnormal gonad development (PubMed:10518501). At the late embryonic stage, intestinal cells fail to divide without affecting endoreduplication which results in 4n DNA cellular content (PubMed:11684669). Mutants show slightly stronger defects including the development of only two enlarged embryonic coelomocytes (PubMed:11684669, PubMed:15708572). Double knockout with lin-35 rescues the cell cycle progression defect in the single cyd-1 mutant (PubMed:11684669, PubMed:25562820).</text>
</comment>
<comment type="similarity">
    <text evidence="8">Belongs to the cyclin family. Cyclin D subfamily.</text>
</comment>
<proteinExistence type="evidence at protein level"/>
<accession>Q9U2M5</accession>
<accession>O77085</accession>
<organism evidence="10">
    <name type="scientific">Caenorhabditis elegans</name>
    <dbReference type="NCBI Taxonomy" id="6239"/>
    <lineage>
        <taxon>Eukaryota</taxon>
        <taxon>Metazoa</taxon>
        <taxon>Ecdysozoa</taxon>
        <taxon>Nematoda</taxon>
        <taxon>Chromadorea</taxon>
        <taxon>Rhabditida</taxon>
        <taxon>Rhabditina</taxon>
        <taxon>Rhabditomorpha</taxon>
        <taxon>Rhabditoidea</taxon>
        <taxon>Rhabditidae</taxon>
        <taxon>Peloderinae</taxon>
        <taxon>Caenorhabditis</taxon>
    </lineage>
</organism>
<feature type="chain" id="PRO_0000433404" description="G1/S-specific cyclin-D" evidence="8">
    <location>
        <begin position="1"/>
        <end position="405"/>
    </location>
</feature>
<feature type="domain" description="Cyclin N-terminal" evidence="1">
    <location>
        <begin position="76"/>
        <end position="200"/>
    </location>
</feature>
<feature type="region of interest" description="Disordered" evidence="2">
    <location>
        <begin position="301"/>
        <end position="405"/>
    </location>
</feature>
<feature type="compositionally biased region" description="Polar residues" evidence="2">
    <location>
        <begin position="311"/>
        <end position="321"/>
    </location>
</feature>
<feature type="compositionally biased region" description="Basic and acidic residues" evidence="2">
    <location>
        <begin position="326"/>
        <end position="335"/>
    </location>
</feature>
<feature type="compositionally biased region" description="Polar residues" evidence="2">
    <location>
        <begin position="358"/>
        <end position="380"/>
    </location>
</feature>
<feature type="mutagenesis site" description="In q626; in both hermaphrodites and males, impaired gonad development due to a failure to generate distal tip cells (DTC)." evidence="6">
    <original>A</original>
    <variation>T</variation>
    <location>
        <position position="205"/>
    </location>
</feature>
<feature type="sequence conflict" description="In Ref. 1; AAC35273." evidence="8" ref="1">
    <original>D</original>
    <variation>N</variation>
    <location>
        <position position="210"/>
    </location>
</feature>
<feature type="sequence conflict" description="In Ref. 1; AAC35273." evidence="8" ref="1">
    <original>M</original>
    <variation>T</variation>
    <location>
        <position position="222"/>
    </location>
</feature>
<dbReference type="EMBL" id="AF053067">
    <property type="protein sequence ID" value="AAC35273.1"/>
    <property type="molecule type" value="mRNA"/>
</dbReference>
<dbReference type="EMBL" id="BX284602">
    <property type="protein sequence ID" value="CAA21630.1"/>
    <property type="molecule type" value="Genomic_DNA"/>
</dbReference>
<dbReference type="PIR" id="T26678">
    <property type="entry name" value="T26678"/>
</dbReference>
<dbReference type="PIR" id="T42992">
    <property type="entry name" value="T42992"/>
</dbReference>
<dbReference type="RefSeq" id="NP_001369816.1">
    <property type="nucleotide sequence ID" value="NM_001383975.2"/>
</dbReference>
<dbReference type="RefSeq" id="NP_496763.1">
    <property type="nucleotide sequence ID" value="NM_064362.5"/>
</dbReference>
<dbReference type="SMR" id="Q9U2M5"/>
<dbReference type="ComplexPortal" id="CPX-1126">
    <property type="entry name" value="Cyclin cyd-1-cdk4 complex"/>
</dbReference>
<dbReference type="FunCoup" id="Q9U2M5">
    <property type="interactions" value="1161"/>
</dbReference>
<dbReference type="IntAct" id="Q9U2M5">
    <property type="interactions" value="2"/>
</dbReference>
<dbReference type="STRING" id="6239.Y38F1A.5.2"/>
<dbReference type="PaxDb" id="6239-Y38F1A.5.2"/>
<dbReference type="EnsemblMetazoa" id="Y38F1A.5.1">
    <property type="protein sequence ID" value="Y38F1A.5.1"/>
    <property type="gene ID" value="WBGene00000870"/>
</dbReference>
<dbReference type="EnsemblMetazoa" id="Y38F1A.5.2">
    <property type="protein sequence ID" value="Y38F1A.5.2"/>
    <property type="gene ID" value="WBGene00000870"/>
</dbReference>
<dbReference type="GeneID" id="174941"/>
<dbReference type="UCSC" id="Y38F1A.5.1">
    <property type="organism name" value="c. elegans"/>
</dbReference>
<dbReference type="AGR" id="WB:WBGene00000870"/>
<dbReference type="WormBase" id="Y38F1A.5">
    <property type="protein sequence ID" value="CE21610"/>
    <property type="gene ID" value="WBGene00000870"/>
    <property type="gene designation" value="cyd-1"/>
</dbReference>
<dbReference type="eggNOG" id="KOG0656">
    <property type="taxonomic scope" value="Eukaryota"/>
</dbReference>
<dbReference type="GeneTree" id="ENSGT00940000168741"/>
<dbReference type="HOGENOM" id="CLU_680145_0_0_1"/>
<dbReference type="InParanoid" id="Q9U2M5"/>
<dbReference type="OMA" id="QWETESP"/>
<dbReference type="OrthoDB" id="306099at2759"/>
<dbReference type="PhylomeDB" id="Q9U2M5"/>
<dbReference type="Reactome" id="R-CEL-5687128">
    <property type="pathway name" value="MAPK6/MAPK4 signaling"/>
</dbReference>
<dbReference type="Reactome" id="R-CEL-75815">
    <property type="pathway name" value="Ubiquitin-dependent degradation of Cyclin D"/>
</dbReference>
<dbReference type="Reactome" id="R-CEL-8934593">
    <property type="pathway name" value="Regulation of RUNX1 Expression and Activity"/>
</dbReference>
<dbReference type="Reactome" id="R-CEL-8951936">
    <property type="pathway name" value="RUNX3 regulates p14-ARF"/>
</dbReference>
<dbReference type="PRO" id="PR:Q9U2M5"/>
<dbReference type="Proteomes" id="UP000001940">
    <property type="component" value="Chromosome II"/>
</dbReference>
<dbReference type="Bgee" id="WBGene00000870">
    <property type="expression patterns" value="Expressed in embryo and 3 other cell types or tissues"/>
</dbReference>
<dbReference type="GO" id="GO:0097128">
    <property type="term" value="C:cyclin D1-CDK4 complex"/>
    <property type="evidence" value="ECO:0000353"/>
    <property type="project" value="ComplexPortal"/>
</dbReference>
<dbReference type="GO" id="GO:0000307">
    <property type="term" value="C:cyclin-dependent protein kinase holoenzyme complex"/>
    <property type="evidence" value="ECO:0000318"/>
    <property type="project" value="GO_Central"/>
</dbReference>
<dbReference type="GO" id="GO:0005737">
    <property type="term" value="C:cytoplasm"/>
    <property type="evidence" value="ECO:0000318"/>
    <property type="project" value="GO_Central"/>
</dbReference>
<dbReference type="GO" id="GO:0005815">
    <property type="term" value="C:microtubule organizing center"/>
    <property type="evidence" value="ECO:0000318"/>
    <property type="project" value="GO_Central"/>
</dbReference>
<dbReference type="GO" id="GO:0005634">
    <property type="term" value="C:nucleus"/>
    <property type="evidence" value="ECO:0000318"/>
    <property type="project" value="GO_Central"/>
</dbReference>
<dbReference type="GO" id="GO:0016538">
    <property type="term" value="F:cyclin-dependent protein serine/threonine kinase regulator activity"/>
    <property type="evidence" value="ECO:0000318"/>
    <property type="project" value="GO_Central"/>
</dbReference>
<dbReference type="GO" id="GO:0008356">
    <property type="term" value="P:asymmetric cell division"/>
    <property type="evidence" value="ECO:0000315"/>
    <property type="project" value="UniProtKB"/>
</dbReference>
<dbReference type="GO" id="GO:0044843">
    <property type="term" value="P:cell cycle G1/S phase transition"/>
    <property type="evidence" value="ECO:0000315"/>
    <property type="project" value="UniProtKB"/>
</dbReference>
<dbReference type="GO" id="GO:0030154">
    <property type="term" value="P:cell differentiation"/>
    <property type="evidence" value="ECO:0007669"/>
    <property type="project" value="UniProtKB-KW"/>
</dbReference>
<dbReference type="GO" id="GO:0000082">
    <property type="term" value="P:G1/S transition of mitotic cell cycle"/>
    <property type="evidence" value="ECO:0000315"/>
    <property type="project" value="ComplexPortal"/>
</dbReference>
<dbReference type="GO" id="GO:0008406">
    <property type="term" value="P:gonad development"/>
    <property type="evidence" value="ECO:0000316"/>
    <property type="project" value="UniProtKB"/>
</dbReference>
<dbReference type="GO" id="GO:0007506">
    <property type="term" value="P:gonadal mesoderm development"/>
    <property type="evidence" value="ECO:0007669"/>
    <property type="project" value="UniProtKB-KW"/>
</dbReference>
<dbReference type="GO" id="GO:0008584">
    <property type="term" value="P:male gonad development"/>
    <property type="evidence" value="ECO:0000315"/>
    <property type="project" value="UniProtKB"/>
</dbReference>
<dbReference type="GO" id="GO:0051782">
    <property type="term" value="P:negative regulation of cell division"/>
    <property type="evidence" value="ECO:0000315"/>
    <property type="project" value="UniProtKB"/>
</dbReference>
<dbReference type="GO" id="GO:0002119">
    <property type="term" value="P:nematode larval development"/>
    <property type="evidence" value="ECO:0000315"/>
    <property type="project" value="UniProtKB"/>
</dbReference>
<dbReference type="GO" id="GO:0045138">
    <property type="term" value="P:nematode male tail tip morphogenesis"/>
    <property type="evidence" value="ECO:0000315"/>
    <property type="project" value="UniProtKB"/>
</dbReference>
<dbReference type="GO" id="GO:1904787">
    <property type="term" value="P:positive regulation of asymmetric protein localization involved in cell fate determination"/>
    <property type="evidence" value="ECO:0000315"/>
    <property type="project" value="UniProtKB"/>
</dbReference>
<dbReference type="GO" id="GO:0090727">
    <property type="term" value="P:positive regulation of brood size"/>
    <property type="evidence" value="ECO:0000315"/>
    <property type="project" value="UniProtKB"/>
</dbReference>
<dbReference type="GO" id="GO:0051781">
    <property type="term" value="P:positive regulation of cell division"/>
    <property type="evidence" value="ECO:0000315"/>
    <property type="project" value="UniProtKB"/>
</dbReference>
<dbReference type="GO" id="GO:0032877">
    <property type="term" value="P:positive regulation of DNA endoreduplication"/>
    <property type="evidence" value="ECO:0000315"/>
    <property type="project" value="UniProtKB"/>
</dbReference>
<dbReference type="GO" id="GO:1900087">
    <property type="term" value="P:positive regulation of G1/S transition of mitotic cell cycle"/>
    <property type="evidence" value="ECO:0000318"/>
    <property type="project" value="GO_Central"/>
</dbReference>
<dbReference type="GO" id="GO:0010628">
    <property type="term" value="P:positive regulation of gene expression"/>
    <property type="evidence" value="ECO:0000315"/>
    <property type="project" value="UniProtKB"/>
</dbReference>
<dbReference type="GO" id="GO:1902806">
    <property type="term" value="P:regulation of cell cycle G1/S phase transition"/>
    <property type="evidence" value="ECO:0000316"/>
    <property type="project" value="UniProtKB"/>
</dbReference>
<dbReference type="GO" id="GO:0051302">
    <property type="term" value="P:regulation of cell division"/>
    <property type="evidence" value="ECO:0000316"/>
    <property type="project" value="UniProtKB"/>
</dbReference>
<dbReference type="GO" id="GO:0032875">
    <property type="term" value="P:regulation of DNA endoreduplication"/>
    <property type="evidence" value="ECO:0000316"/>
    <property type="project" value="UniProtKB"/>
</dbReference>
<dbReference type="GO" id="GO:0007530">
    <property type="term" value="P:sex determination"/>
    <property type="evidence" value="ECO:0000315"/>
    <property type="project" value="UniProtKB"/>
</dbReference>
<dbReference type="CDD" id="cd20515">
    <property type="entry name" value="CYCLIN_CCND_rpt1"/>
    <property type="match status" value="1"/>
</dbReference>
<dbReference type="FunFam" id="1.10.472.10:FF:000003">
    <property type="entry name" value="G1/S-specific cyclin-D2"/>
    <property type="match status" value="1"/>
</dbReference>
<dbReference type="Gene3D" id="1.10.472.10">
    <property type="entry name" value="Cyclin-like"/>
    <property type="match status" value="2"/>
</dbReference>
<dbReference type="InterPro" id="IPR039361">
    <property type="entry name" value="Cyclin"/>
</dbReference>
<dbReference type="InterPro" id="IPR013763">
    <property type="entry name" value="Cyclin-like_dom"/>
</dbReference>
<dbReference type="InterPro" id="IPR036915">
    <property type="entry name" value="Cyclin-like_sf"/>
</dbReference>
<dbReference type="InterPro" id="IPR006671">
    <property type="entry name" value="Cyclin_N"/>
</dbReference>
<dbReference type="InterPro" id="IPR048258">
    <property type="entry name" value="Cyclins_cyclin-box"/>
</dbReference>
<dbReference type="PANTHER" id="PTHR10177">
    <property type="entry name" value="CYCLINS"/>
    <property type="match status" value="1"/>
</dbReference>
<dbReference type="Pfam" id="PF00134">
    <property type="entry name" value="Cyclin_N"/>
    <property type="match status" value="1"/>
</dbReference>
<dbReference type="SMART" id="SM00385">
    <property type="entry name" value="CYCLIN"/>
    <property type="match status" value="1"/>
</dbReference>
<dbReference type="SUPFAM" id="SSF47954">
    <property type="entry name" value="Cyclin-like"/>
    <property type="match status" value="1"/>
</dbReference>
<dbReference type="PROSITE" id="PS00292">
    <property type="entry name" value="CYCLINS"/>
    <property type="match status" value="1"/>
</dbReference>
<sequence>MDFESSSAGPSTSYAEEPCTLSMLPQVSAVLSETSITESNVSCQLHPSRSAALNDNVRTLIYNRTDPHIQLDMRAFYNCMEYEEALQPNYHYFTGVQENITPFHREQAIDWIYDVAKEENCDGDVFLLAVSLIDRFMSVQNILKHDIQMIAGVALFIASKLKAPHPMTASKIAYYSDNSCPIDMILQWELLIVTTLQWETESPTAFSFFDFLASRIPQIHNMRGDFQTVVQKCQKMHKLATLFPSMQCAIGLYYVSNLPTQNKELAVKIKDLLANMFQLEVNLLDSYIPMVQRCMSTTPIYTSEDAEKTEPTPSAPASTQEPEAFQELKELKEEPLPTPPPEEPAFQKLVLLEPIPLSEQTPSTPLNDSGFSSDVSSPASSEKKRRRSTDWFEEDSTPPKIFKTL</sequence>
<protein>
    <recommendedName>
        <fullName evidence="8">G1/S-specific cyclin-D</fullName>
    </recommendedName>
</protein>
<name>CCND_CAEEL</name>
<reference evidence="9" key="1">
    <citation type="journal article" date="1999" name="Development">
        <title>Regulation of postembryonic G(1) cell cycle progression in Caenorhabditis elegans by a cyclin D/CDK-like complex.</title>
        <authorList>
            <person name="Park M."/>
            <person name="Krause M.W."/>
        </authorList>
    </citation>
    <scope>NUCLEOTIDE SEQUENCE [MRNA]</scope>
    <scope>FUNCTION</scope>
    <scope>INTERACTION WITH CDK-4</scope>
    <scope>DEVELOPMENTAL STAGE</scope>
    <scope>DISRUPTION PHENOTYPE</scope>
</reference>
<reference evidence="10" key="2">
    <citation type="journal article" date="1998" name="Science">
        <title>Genome sequence of the nematode C. elegans: a platform for investigating biology.</title>
        <authorList>
            <consortium name="The C. elegans sequencing consortium"/>
        </authorList>
    </citation>
    <scope>NUCLEOTIDE SEQUENCE [LARGE SCALE GENOMIC DNA]</scope>
    <source>
        <strain evidence="10">Bristol N2</strain>
    </source>
</reference>
<reference evidence="8" key="3">
    <citation type="journal article" date="2001" name="Development">
        <title>lin-35 Rb and cki-1 Cip/Kip cooperate in developmental regulation of G1 progression in C. elegans.</title>
        <authorList>
            <person name="Boxem M."/>
            <person name="van den Heuvel S."/>
        </authorList>
    </citation>
    <scope>FUNCTION</scope>
    <scope>DISRUPTION PHENOTYPE</scope>
</reference>
<reference evidence="8" key="4">
    <citation type="journal article" date="2005" name="Dev. Biol.">
        <title>Cyclin D involvement demarcates a late transition in C. elegans embryogenesis.</title>
        <authorList>
            <person name="Yanowitz J."/>
            <person name="Fire A."/>
        </authorList>
    </citation>
    <scope>FUNCTION</scope>
    <scope>DISRUPTION PHENOTYPE</scope>
</reference>
<reference evidence="8" key="5">
    <citation type="journal article" date="2005" name="Dev. Cell">
        <title>Cyclin D regulation of a sexually dimorphic asymmetric cell division.</title>
        <authorList>
            <person name="Tilmann C."/>
            <person name="Kimble J."/>
        </authorList>
    </citation>
    <scope>FUNCTION</scope>
    <scope>MUTAGENESIS OF ALA-205</scope>
</reference>
<reference key="6">
    <citation type="journal article" date="2015" name="Nat. Commun.">
        <title>Rb and FZR1/Cdh1 determine CDK4/6-cyclin D requirement in C. elegans and human cancer cells.</title>
        <authorList>
            <person name="The I."/>
            <person name="Ruijtenberg S."/>
            <person name="Bouchet B.P."/>
            <person name="Cristobal A."/>
            <person name="Prinsen M.B."/>
            <person name="van Mourik T."/>
            <person name="Koreth J."/>
            <person name="Xu H."/>
            <person name="Heck A.J."/>
            <person name="Akhmanova A."/>
            <person name="Cuppen E."/>
            <person name="Boxem M."/>
            <person name="Munoz J."/>
            <person name="van den Heuvel S."/>
        </authorList>
    </citation>
    <scope>FUNCTION</scope>
    <scope>DISRUPTION PHENOTYPE</scope>
</reference>
<keyword id="KW-0131">Cell cycle</keyword>
<keyword id="KW-0132">Cell division</keyword>
<keyword id="KW-0195">Cyclin</keyword>
<keyword id="KW-0221">Differentiation</keyword>
<keyword id="KW-0334">Gonadal differentiation</keyword>
<keyword id="KW-1185">Reference proteome</keyword>
<gene>
    <name evidence="11" type="primary">cyd-1</name>
    <name evidence="11" type="ORF">Y38F1A.5</name>
</gene>
<evidence type="ECO:0000255" key="1"/>
<evidence type="ECO:0000256" key="2">
    <source>
        <dbReference type="SAM" id="MobiDB-lite"/>
    </source>
</evidence>
<evidence type="ECO:0000269" key="3">
    <source>
    </source>
</evidence>
<evidence type="ECO:0000269" key="4">
    <source>
    </source>
</evidence>
<evidence type="ECO:0000269" key="5">
    <source>
    </source>
</evidence>
<evidence type="ECO:0000269" key="6">
    <source>
    </source>
</evidence>
<evidence type="ECO:0000269" key="7">
    <source>
    </source>
</evidence>
<evidence type="ECO:0000305" key="8"/>
<evidence type="ECO:0000312" key="9">
    <source>
        <dbReference type="EMBL" id="AAC35273.1"/>
    </source>
</evidence>
<evidence type="ECO:0000312" key="10">
    <source>
        <dbReference type="Proteomes" id="UP000001940"/>
    </source>
</evidence>
<evidence type="ECO:0000312" key="11">
    <source>
        <dbReference type="WormBase" id="Y38F1A.5"/>
    </source>
</evidence>